<reference key="1">
    <citation type="journal article" date="1996" name="J. Virol.">
        <title>Determination and analysis of the complete nucleotide sequence of human herpesvirus.</title>
        <authorList>
            <person name="Nicholas J."/>
        </authorList>
    </citation>
    <scope>NUCLEOTIDE SEQUENCE [LARGE SCALE GENOMIC DNA]</scope>
</reference>
<organism>
    <name type="scientific">Human herpesvirus 7 (strain JI)</name>
    <name type="common">HHV-7</name>
    <name type="synonym">Human T lymphotropic virus</name>
    <dbReference type="NCBI Taxonomy" id="57278"/>
    <lineage>
        <taxon>Viruses</taxon>
        <taxon>Duplodnaviria</taxon>
        <taxon>Heunggongvirae</taxon>
        <taxon>Peploviricota</taxon>
        <taxon>Herviviricetes</taxon>
        <taxon>Herpesvirales</taxon>
        <taxon>Orthoherpesviridae</taxon>
        <taxon>Betaherpesvirinae</taxon>
        <taxon>Roseolovirus</taxon>
        <taxon>Roseolovirus humanbeta7</taxon>
        <taxon>Human betaherpesvirus 7</taxon>
    </lineage>
</organism>
<protein>
    <recommendedName>
        <fullName>Probable ganciclovir kinase</fullName>
        <ecNumber>2.7.1.-</ecNumber>
    </recommendedName>
</protein>
<dbReference type="EC" id="2.7.1.-"/>
<dbReference type="EMBL" id="U43400">
    <property type="protein sequence ID" value="AAC54730.1"/>
    <property type="molecule type" value="Genomic_DNA"/>
</dbReference>
<dbReference type="PIR" id="T41970">
    <property type="entry name" value="T41970"/>
</dbReference>
<dbReference type="RefSeq" id="YP_073809.1">
    <property type="nucleotide sequence ID" value="NC_001716.2"/>
</dbReference>
<dbReference type="DNASU" id="3289527"/>
<dbReference type="GeneID" id="3289527"/>
<dbReference type="KEGG" id="vg:3289527"/>
<dbReference type="Proteomes" id="UP000009246">
    <property type="component" value="Segment"/>
</dbReference>
<dbReference type="GO" id="GO:0005524">
    <property type="term" value="F:ATP binding"/>
    <property type="evidence" value="ECO:0007669"/>
    <property type="project" value="UniProtKB-KW"/>
</dbReference>
<dbReference type="GO" id="GO:0004672">
    <property type="term" value="F:protein kinase activity"/>
    <property type="evidence" value="ECO:0007669"/>
    <property type="project" value="InterPro"/>
</dbReference>
<dbReference type="GO" id="GO:0016032">
    <property type="term" value="P:viral process"/>
    <property type="evidence" value="ECO:0007669"/>
    <property type="project" value="InterPro"/>
</dbReference>
<dbReference type="Gene3D" id="1.10.510.10">
    <property type="entry name" value="Transferase(Phosphotransferase) domain 1"/>
    <property type="match status" value="1"/>
</dbReference>
<dbReference type="InterPro" id="IPR010615">
    <property type="entry name" value="Herpes_UL97"/>
</dbReference>
<dbReference type="InterPro" id="IPR011009">
    <property type="entry name" value="Kinase-like_dom_sf"/>
</dbReference>
<dbReference type="InterPro" id="IPR008266">
    <property type="entry name" value="Tyr_kinase_AS"/>
</dbReference>
<dbReference type="Pfam" id="PF06734">
    <property type="entry name" value="UL97"/>
    <property type="match status" value="1"/>
</dbReference>
<dbReference type="SUPFAM" id="SSF56112">
    <property type="entry name" value="Protein kinase-like (PK-like)"/>
    <property type="match status" value="1"/>
</dbReference>
<dbReference type="PROSITE" id="PS00109">
    <property type="entry name" value="PROTEIN_KINASE_TYR"/>
    <property type="match status" value="1"/>
</dbReference>
<feature type="chain" id="PRO_0000088196" description="Probable ganciclovir kinase">
    <location>
        <begin position="1"/>
        <end position="546"/>
    </location>
</feature>
<feature type="region of interest" description="Disordered" evidence="3">
    <location>
        <begin position="1"/>
        <end position="29"/>
    </location>
</feature>
<feature type="compositionally biased region" description="Polar residues" evidence="3">
    <location>
        <begin position="1"/>
        <end position="11"/>
    </location>
</feature>
<feature type="compositionally biased region" description="Basic residues" evidence="3">
    <location>
        <begin position="12"/>
        <end position="29"/>
    </location>
</feature>
<feature type="active site" description="Proton acceptor" evidence="2">
    <location>
        <position position="297"/>
    </location>
</feature>
<feature type="binding site" evidence="1">
    <location>
        <begin position="185"/>
        <end position="193"/>
    </location>
    <ligand>
        <name>ATP</name>
        <dbReference type="ChEBI" id="CHEBI:30616"/>
    </ligand>
</feature>
<feature type="binding site" evidence="1">
    <location>
        <position position="202"/>
    </location>
    <ligand>
        <name>ATP</name>
        <dbReference type="ChEBI" id="CHEBI:30616"/>
    </ligand>
</feature>
<proteinExistence type="inferred from homology"/>
<organismHost>
    <name type="scientific">Homo sapiens</name>
    <name type="common">Human</name>
    <dbReference type="NCBI Taxonomy" id="9606"/>
</organismHost>
<evidence type="ECO:0000250" key="1"/>
<evidence type="ECO:0000255" key="2">
    <source>
        <dbReference type="PROSITE-ProRule" id="PRU10028"/>
    </source>
</evidence>
<evidence type="ECO:0000256" key="3">
    <source>
        <dbReference type="SAM" id="MobiDB-lite"/>
    </source>
</evidence>
<evidence type="ECO:0000305" key="4"/>
<name>GCVK_HHV7J</name>
<keyword id="KW-0067">ATP-binding</keyword>
<keyword id="KW-0244">Early protein</keyword>
<keyword id="KW-0418">Kinase</keyword>
<keyword id="KW-0547">Nucleotide-binding</keyword>
<keyword id="KW-1185">Reference proteome</keyword>
<keyword id="KW-0808">Transferase</keyword>
<comment type="function">
    <text evidence="1">Phosphorylates the antiviral nucleoside analog ganciclovir.</text>
</comment>
<comment type="similarity">
    <text evidence="4">Belongs to the protein kinase superfamily. Tyr protein kinase family. HCMV ganciclovir subfamily.</text>
</comment>
<accession>P52344</accession>
<sequence length="546" mass="62854">MEQLKTPQNQKTRPRNMLPKKKGKELKKRPCKVKRKLFGSENIRPNKKIPLASDVDNELEKKRGSMIRKRSETDLCPDPSVTDLLCHESLTVSPKFERDGLSACTEFENFMDTRKIVLSRNEKSVTDLSAHYPVLCNLGIFERIHSPFLFSIHIDTQSFSVVYVPHKESSCSQFCEPEKNMARILGSGSYGMVYDLNNVAIKASDDLESCISSYVSGVVRAKAGAQLTSRECVFKSLLICNSVCLNHKISLSKTYDTDLYKFTDWKLENVENYYSIFCNLAEAVRFLNMVCKINHCDISLANILIHHKEGIILEAVLADYSLAEVHPQYNGKCGILRQFDHRIQIVPKSYNKLCDMFNPGFRPMIAHKIILVEVYAEFDGKGNPVRHCNLDLCALAQVFLLCVIRMLDERGCREAQKYYENRLFTYSNEACTLNPIKYPLEYKDACCKVLAEHLVLFGILFYREVVDMFENLYDFLHASGDLSVRDLLEETYVNDSRDVRRQPIRYRHAQLQRHEIGQILLNDLQQLLSIITISDLEKDPYSVFRV</sequence>
<gene>
    <name type="primary">U69</name>
</gene>